<evidence type="ECO:0000269" key="1">
    <source>
    </source>
</evidence>
<evidence type="ECO:0000269" key="2">
    <source>
    </source>
</evidence>
<evidence type="ECO:0000269" key="3">
    <source>
    </source>
</evidence>
<evidence type="ECO:0000269" key="4">
    <source>
    </source>
</evidence>
<evidence type="ECO:0000269" key="5">
    <source>
    </source>
</evidence>
<evidence type="ECO:0000269" key="6">
    <source>
    </source>
</evidence>
<evidence type="ECO:0000269" key="7">
    <source>
    </source>
</evidence>
<evidence type="ECO:0000269" key="8">
    <source>
    </source>
</evidence>
<evidence type="ECO:0000305" key="9"/>
<evidence type="ECO:0000312" key="10">
    <source>
        <dbReference type="EMBL" id="ABO09841.1"/>
    </source>
</evidence>
<evidence type="ECO:0000312" key="11">
    <source>
        <dbReference type="EMBL" id="BAF56585.1"/>
    </source>
</evidence>
<evidence type="ECO:0000312" key="12">
    <source>
        <dbReference type="FlyBase" id="FBgn0259730"/>
    </source>
</evidence>
<evidence type="ECO:0000312" key="13">
    <source>
        <dbReference type="Proteomes" id="UP000000803"/>
    </source>
</evidence>
<reference evidence="11" key="1">
    <citation type="journal article" date="2007" name="Nat. Cell Biol.">
        <title>Small peptide regulators of actin-based cell morphogenesis encoded by a polycistronic mRNA.</title>
        <authorList>
            <person name="Kondo T."/>
            <person name="Hashimoto Y."/>
            <person name="Kato K."/>
            <person name="Inagaki S."/>
            <person name="Hayashi S."/>
            <person name="Kageyama Y."/>
        </authorList>
    </citation>
    <scope>NUCLEOTIDE SEQUENCE [MRNA]</scope>
    <scope>FUNCTION</scope>
    <scope>DISRUPTION PHENOTYPE</scope>
</reference>
<reference evidence="10" key="2">
    <citation type="journal article" date="2007" name="PLoS Biol.">
        <title>Peptides encoded by short ORFs control development and define a new eukaryotic gene family.</title>
        <authorList>
            <person name="Galindo M.I."/>
            <person name="Pueyo J.I."/>
            <person name="Fouix S."/>
            <person name="Bishop S.A."/>
            <person name="Couso J.P."/>
        </authorList>
    </citation>
    <scope>NUCLEOTIDE SEQUENCE [MRNA]</scope>
    <scope>FUNCTION</scope>
    <scope>DEVELOPMENTAL STAGE</scope>
    <scope>DISRUPTION PHENOTYPE</scope>
</reference>
<reference evidence="13" key="3">
    <citation type="journal article" date="2000" name="Science">
        <title>The genome sequence of Drosophila melanogaster.</title>
        <authorList>
            <person name="Adams M.D."/>
            <person name="Celniker S.E."/>
            <person name="Holt R.A."/>
            <person name="Evans C.A."/>
            <person name="Gocayne J.D."/>
            <person name="Amanatides P.G."/>
            <person name="Scherer S.E."/>
            <person name="Li P.W."/>
            <person name="Hoskins R.A."/>
            <person name="Galle R.F."/>
            <person name="George R.A."/>
            <person name="Lewis S.E."/>
            <person name="Richards S."/>
            <person name="Ashburner M."/>
            <person name="Henderson S.N."/>
            <person name="Sutton G.G."/>
            <person name="Wortman J.R."/>
            <person name="Yandell M.D."/>
            <person name="Zhang Q."/>
            <person name="Chen L.X."/>
            <person name="Brandon R.C."/>
            <person name="Rogers Y.-H.C."/>
            <person name="Blazej R.G."/>
            <person name="Champe M."/>
            <person name="Pfeiffer B.D."/>
            <person name="Wan K.H."/>
            <person name="Doyle C."/>
            <person name="Baxter E.G."/>
            <person name="Helt G."/>
            <person name="Nelson C.R."/>
            <person name="Miklos G.L.G."/>
            <person name="Abril J.F."/>
            <person name="Agbayani A."/>
            <person name="An H.-J."/>
            <person name="Andrews-Pfannkoch C."/>
            <person name="Baldwin D."/>
            <person name="Ballew R.M."/>
            <person name="Basu A."/>
            <person name="Baxendale J."/>
            <person name="Bayraktaroglu L."/>
            <person name="Beasley E.M."/>
            <person name="Beeson K.Y."/>
            <person name="Benos P.V."/>
            <person name="Berman B.P."/>
            <person name="Bhandari D."/>
            <person name="Bolshakov S."/>
            <person name="Borkova D."/>
            <person name="Botchan M.R."/>
            <person name="Bouck J."/>
            <person name="Brokstein P."/>
            <person name="Brottier P."/>
            <person name="Burtis K.C."/>
            <person name="Busam D.A."/>
            <person name="Butler H."/>
            <person name="Cadieu E."/>
            <person name="Center A."/>
            <person name="Chandra I."/>
            <person name="Cherry J.M."/>
            <person name="Cawley S."/>
            <person name="Dahlke C."/>
            <person name="Davenport L.B."/>
            <person name="Davies P."/>
            <person name="de Pablos B."/>
            <person name="Delcher A."/>
            <person name="Deng Z."/>
            <person name="Mays A.D."/>
            <person name="Dew I."/>
            <person name="Dietz S.M."/>
            <person name="Dodson K."/>
            <person name="Doup L.E."/>
            <person name="Downes M."/>
            <person name="Dugan-Rocha S."/>
            <person name="Dunkov B.C."/>
            <person name="Dunn P."/>
            <person name="Durbin K.J."/>
            <person name="Evangelista C.C."/>
            <person name="Ferraz C."/>
            <person name="Ferriera S."/>
            <person name="Fleischmann W."/>
            <person name="Fosler C."/>
            <person name="Gabrielian A.E."/>
            <person name="Garg N.S."/>
            <person name="Gelbart W.M."/>
            <person name="Glasser K."/>
            <person name="Glodek A."/>
            <person name="Gong F."/>
            <person name="Gorrell J.H."/>
            <person name="Gu Z."/>
            <person name="Guan P."/>
            <person name="Harris M."/>
            <person name="Harris N.L."/>
            <person name="Harvey D.A."/>
            <person name="Heiman T.J."/>
            <person name="Hernandez J.R."/>
            <person name="Houck J."/>
            <person name="Hostin D."/>
            <person name="Houston K.A."/>
            <person name="Howland T.J."/>
            <person name="Wei M.-H."/>
            <person name="Ibegwam C."/>
            <person name="Jalali M."/>
            <person name="Kalush F."/>
            <person name="Karpen G.H."/>
            <person name="Ke Z."/>
            <person name="Kennison J.A."/>
            <person name="Ketchum K.A."/>
            <person name="Kimmel B.E."/>
            <person name="Kodira C.D."/>
            <person name="Kraft C.L."/>
            <person name="Kravitz S."/>
            <person name="Kulp D."/>
            <person name="Lai Z."/>
            <person name="Lasko P."/>
            <person name="Lei Y."/>
            <person name="Levitsky A.A."/>
            <person name="Li J.H."/>
            <person name="Li Z."/>
            <person name="Liang Y."/>
            <person name="Lin X."/>
            <person name="Liu X."/>
            <person name="Mattei B."/>
            <person name="McIntosh T.C."/>
            <person name="McLeod M.P."/>
            <person name="McPherson D."/>
            <person name="Merkulov G."/>
            <person name="Milshina N.V."/>
            <person name="Mobarry C."/>
            <person name="Morris J."/>
            <person name="Moshrefi A."/>
            <person name="Mount S.M."/>
            <person name="Moy M."/>
            <person name="Murphy B."/>
            <person name="Murphy L."/>
            <person name="Muzny D.M."/>
            <person name="Nelson D.L."/>
            <person name="Nelson D.R."/>
            <person name="Nelson K.A."/>
            <person name="Nixon K."/>
            <person name="Nusskern D.R."/>
            <person name="Pacleb J.M."/>
            <person name="Palazzolo M."/>
            <person name="Pittman G.S."/>
            <person name="Pan S."/>
            <person name="Pollard J."/>
            <person name="Puri V."/>
            <person name="Reese M.G."/>
            <person name="Reinert K."/>
            <person name="Remington K."/>
            <person name="Saunders R.D.C."/>
            <person name="Scheeler F."/>
            <person name="Shen H."/>
            <person name="Shue B.C."/>
            <person name="Siden-Kiamos I."/>
            <person name="Simpson M."/>
            <person name="Skupski M.P."/>
            <person name="Smith T.J."/>
            <person name="Spier E."/>
            <person name="Spradling A.C."/>
            <person name="Stapleton M."/>
            <person name="Strong R."/>
            <person name="Sun E."/>
            <person name="Svirskas R."/>
            <person name="Tector C."/>
            <person name="Turner R."/>
            <person name="Venter E."/>
            <person name="Wang A.H."/>
            <person name="Wang X."/>
            <person name="Wang Z.-Y."/>
            <person name="Wassarman D.A."/>
            <person name="Weinstock G.M."/>
            <person name="Weissenbach J."/>
            <person name="Williams S.M."/>
            <person name="Woodage T."/>
            <person name="Worley K.C."/>
            <person name="Wu D."/>
            <person name="Yang S."/>
            <person name="Yao Q.A."/>
            <person name="Ye J."/>
            <person name="Yeh R.-F."/>
            <person name="Zaveri J.S."/>
            <person name="Zhan M."/>
            <person name="Zhang G."/>
            <person name="Zhao Q."/>
            <person name="Zheng L."/>
            <person name="Zheng X.H."/>
            <person name="Zhong F.N."/>
            <person name="Zhong W."/>
            <person name="Zhou X."/>
            <person name="Zhu S.C."/>
            <person name="Zhu X."/>
            <person name="Smith H.O."/>
            <person name="Gibbs R.A."/>
            <person name="Myers E.W."/>
            <person name="Rubin G.M."/>
            <person name="Venter J.C."/>
        </authorList>
    </citation>
    <scope>NUCLEOTIDE SEQUENCE [LARGE SCALE GENOMIC DNA]</scope>
    <source>
        <strain evidence="13">Berkeley</strain>
    </source>
</reference>
<reference evidence="13" key="4">
    <citation type="journal article" date="2002" name="Genome Biol.">
        <title>Annotation of the Drosophila melanogaster euchromatic genome: a systematic review.</title>
        <authorList>
            <person name="Misra S."/>
            <person name="Crosby M.A."/>
            <person name="Mungall C.J."/>
            <person name="Matthews B.B."/>
            <person name="Campbell K.S."/>
            <person name="Hradecky P."/>
            <person name="Huang Y."/>
            <person name="Kaminker J.S."/>
            <person name="Millburn G.H."/>
            <person name="Prochnik S.E."/>
            <person name="Smith C.D."/>
            <person name="Tupy J.L."/>
            <person name="Whitfield E.J."/>
            <person name="Bayraktaroglu L."/>
            <person name="Berman B.P."/>
            <person name="Bettencourt B.R."/>
            <person name="Celniker S.E."/>
            <person name="de Grey A.D.N.J."/>
            <person name="Drysdale R.A."/>
            <person name="Harris N.L."/>
            <person name="Richter J."/>
            <person name="Russo S."/>
            <person name="Schroeder A.J."/>
            <person name="Shu S.Q."/>
            <person name="Stapleton M."/>
            <person name="Yamada C."/>
            <person name="Ashburner M."/>
            <person name="Gelbart W.M."/>
            <person name="Rubin G.M."/>
            <person name="Lewis S.E."/>
        </authorList>
    </citation>
    <scope>GENOME REANNOTATION</scope>
    <source>
        <strain evidence="13">Berkeley</strain>
    </source>
</reference>
<reference evidence="9" key="5">
    <citation type="journal article" date="2008" name="Dev. Biol.">
        <title>The 11-aminoacid long Tarsal-less peptides trigger a cell signal in Drosophila leg development.</title>
        <authorList>
            <person name="Pueyo J.I."/>
            <person name="Couso J.P."/>
        </authorList>
    </citation>
    <scope>FUNCTION</scope>
    <scope>DEVELOPMENTAL STAGE</scope>
</reference>
<reference evidence="9" key="6">
    <citation type="journal article" date="2010" name="Science">
        <title>Small peptides switch the transcriptional activity of Shavenbaby during Drosophila embryogenesis.</title>
        <authorList>
            <person name="Kondo T."/>
            <person name="Plaza S."/>
            <person name="Zanet J."/>
            <person name="Benrabah E."/>
            <person name="Valenti P."/>
            <person name="Hashimoto Y."/>
            <person name="Kobayashi S."/>
            <person name="Payre F."/>
            <person name="Kageyama Y."/>
        </authorList>
    </citation>
    <scope>FUNCTION</scope>
</reference>
<reference evidence="9" key="7">
    <citation type="journal article" date="2011" name="Dev. Biol.">
        <title>Tarsal-less peptides control Notch signalling through the Shavenbaby transcription factor.</title>
        <authorList>
            <person name="Pueyo J.I."/>
            <person name="Couso J.P."/>
        </authorList>
    </citation>
    <scope>FUNCTION</scope>
</reference>
<reference evidence="9" key="8">
    <citation type="journal article" date="2011" name="J. Biomed. Sci.">
        <title>Identification of 11-amino acid peptides that disrupt Notch-mediated processes in Drosophila.</title>
        <authorList>
            <person name="Pi H."/>
            <person name="Huang Y.C."/>
            <person name="Chen I.C."/>
            <person name="Lin C.D."/>
            <person name="Yeh H.F."/>
            <person name="Pai L.M."/>
        </authorList>
    </citation>
    <scope>FUNCTION</scope>
    <scope>DEVELOPMENTAL STAGE</scope>
</reference>
<reference evidence="9" key="9">
    <citation type="journal article" date="2014" name="Nat. Cell Biol.">
        <title>Pri peptides are mediators of ecdysone for the temporal control of development.</title>
        <authorList>
            <person name="Chanut-Delalande H."/>
            <person name="Hashimoto Y."/>
            <person name="Pelissier-Monier A."/>
            <person name="Spokony R."/>
            <person name="Dib A."/>
            <person name="Kondo T."/>
            <person name="Bohere J."/>
            <person name="Niimi K."/>
            <person name="Latapie Y."/>
            <person name="Inagaki S."/>
            <person name="Dubois L."/>
            <person name="Valenti P."/>
            <person name="Polesello C."/>
            <person name="Kobayashi S."/>
            <person name="Moussian B."/>
            <person name="White K.P."/>
            <person name="Plaza S."/>
            <person name="Kageyama Y."/>
            <person name="Payre F."/>
        </authorList>
    </citation>
    <scope>FUNCTION</scope>
    <scope>DEVELOPMENTAL STAGE</scope>
    <scope>INDUCTION BY ECDYSONE</scope>
</reference>
<reference evidence="9" key="10">
    <citation type="journal article" date="2015" name="Science">
        <title>Pri sORF peptides induce selective proteasome-mediated protein processing.</title>
        <authorList>
            <person name="Zanet J."/>
            <person name="Benrabah E."/>
            <person name="Li T."/>
            <person name="Pelissier-Monier A."/>
            <person name="Chanut-Delalande H."/>
            <person name="Ronsin B."/>
            <person name="Bellen H.J."/>
            <person name="Payre F."/>
            <person name="Plaza S."/>
        </authorList>
    </citation>
    <scope>FUNCTION</scope>
    <scope>INTERACTION WITH UBR3</scope>
    <scope>SUBCELLULAR LOCATION</scope>
</reference>
<organism>
    <name type="scientific">Drosophila melanogaster</name>
    <name type="common">Fruit fly</name>
    <dbReference type="NCBI Taxonomy" id="7227"/>
    <lineage>
        <taxon>Eukaryota</taxon>
        <taxon>Metazoa</taxon>
        <taxon>Ecdysozoa</taxon>
        <taxon>Arthropoda</taxon>
        <taxon>Hexapoda</taxon>
        <taxon>Insecta</taxon>
        <taxon>Pterygota</taxon>
        <taxon>Neoptera</taxon>
        <taxon>Endopterygota</taxon>
        <taxon>Diptera</taxon>
        <taxon>Brachycera</taxon>
        <taxon>Muscomorpha</taxon>
        <taxon>Ephydroidea</taxon>
        <taxon>Drosophilidae</taxon>
        <taxon>Drosophila</taxon>
        <taxon>Sophophora</taxon>
    </lineage>
</organism>
<comment type="function">
    <text evidence="1 2 3 4 5 6 7 8">One of four peptides (tal-1A, tal-2A, tal-3A and tal-AA) produced from a polycistronic gene that function redundantly in several developmental processes (PubMed:17439302, PubMed:17486114, PubMed:21527259, PubMed:25344753). Required in early stages of leg development for the intercalation of the tarsal segments during the mid-third instar stage and later for tarsal joint formation (PubMed:17439302, PubMed:18801356, PubMed:21527259). Promotes the post-translational modification of ovo isoform B (svb) into its active form which in turn initiates trichome development and promotes tarsal joint development (PubMed:20647469, PubMed:21527259, PubMed:26383956). This is likely due to recruitment of the E3 ubiquitin-protein ligase Ubr3 to svb for ubiquitination of its N-terminus, converting svb into a transcriptional activator (PubMed:26383956). Also enhances interaction of Ubr3 with Diap1 (PubMed:26383956). Required for correct wing and leg formation through its regulation of several genes including those in the Notch signaling pathway (PubMed:18801356, PubMed:21527259, PubMed:21682860). Essential for denticle formation and may have a role in the developmental timing of trichome differentiation (PubMed:17486114, PubMed:25344753). Essential for the development of taenidial folds in the trachea (PubMed:17486114).</text>
</comment>
<comment type="subunit">
    <text evidence="8">Interacts with Ubr3.</text>
</comment>
<comment type="subcellular location">
    <subcellularLocation>
        <location evidence="8">Cytoplasm</location>
    </subcellularLocation>
    <subcellularLocation>
        <location evidence="8">Nucleus</location>
    </subcellularLocation>
</comment>
<comment type="developmental stage">
    <text evidence="1 3 6 7">At early stages of embryogenesis, the polycistronic RNA is expressed in seven segmentally separated blastoderm stripes and in a cluster of cells in the anterior part of the embryo (PubMed:17439302). By stage 13 to the end of embryo development, it is expressed in the dorsal trunks, posterior spiracles, pharynx, hindgut and the area which forms the denticle belts (PubMed:17439302). In the leg disk, it is expressed in a ring pattern presumed to be developing tarsal region around 80 to 96 hour after egg laying (AEL) and then in the tarsal furrow at the mid-third instar larval stage (PubMed:17439302, PubMed:18801356). Not detected in the tarsal primordium after 100h AEL but is still expressed in a dorsal chordotonal organ of the leg disk (PubMed:17439302). In pupae, expressed broadly throughout the leg disk 0-3 hour after puparium formation (APF) but is not detected in this region 6 hours APF (PubMed:25344753). High expression 4-8 hours APF in the presumptive joints between tarsal segments (PubMed:21682860). In the noctum expressed from 40 to 44 hours APF (PubMed:25344753). In wing disks of third stage larvae, expressed in two anterior stripes and later in the precursors for chemosensory organs (PubMed:21682860). From late third stage instar larvae to early pupal stages, it is also expressed in the wing provein cells that develop into longitudinal veins L2-L5 (PubMed:21682860). In eye disks, expressed in preclusters for presumptive R8 photoreceptors and in a stripe of cells in the posterior region of the disk (PubMed:21682860).</text>
</comment>
<comment type="induction">
    <text evidence="7">Polycistronic RNA up-regulated by ecdysone.</text>
</comment>
<comment type="disruption phenotype">
    <text evidence="1 2">Simultaneous knockout of tal-1A, tal-2A, tal-3A and tal-AA is embryonic lethal (PubMed:17439302, PubMed:17486114). In embryos chitin secretion and formation of the cuticular exoskeleton appears to be normal (PubMed:17439302, PubMed:17486114). However embryos display a loss of denticle belts and dorsal hairs (PubMed:17439302, PubMed:17486114). Segment-specific epidermal sensory organs are present and segments form normally (PubMed:17439302). The cephalopharyngeal skeleton is lost, and the head skeleton and posterior spiracles are deformed (PubMed:17439302). In the developing leg, tarsal constriction occurs but the tarsal fold does not form (PubMed:17439302). The tracheal system is abnormal displaying a loss of network integrity, an irregular tube diameter and the absence of taenidial folds (PubMed:17439302, PubMed:17486114). Cell packing is not affected, but there is no accumulation of F-actin at the sites of denticle differentiation or formation of F-actin bundles during taenidial development and tracheal tube dilation (stages 14 and 16) (PubMed:17486114). Other F-actin based developmental processes such as filopodia formation of tracheal tip cells, dorsal closure, mitosis or tight packing of denticle cells are unaffected (PubMed:17486114). Denticle and tracheal defects can be rescued by ectopic expression of any one of the four tal peptides (tal-1A, tal-2A, tal-3A and tal-AA) (PubMed:17486114).</text>
</comment>
<comment type="miscellaneous">
    <text evidence="1 2">This protein is produced by a polycistronic gene which also produces tal-2A, tal-3A and tal-AA from non-overlapping reading frames (PubMed:17439302, PubMed:17486114). tal-1A and tal-2A produce the same protein from different reading frames (PubMed:17439302, PubMed:17486114).</text>
</comment>
<accession>C0HJX4</accession>
<accession>A3RLQ8</accession>
<gene>
    <name evidence="12" type="primary">tal-1A</name>
    <name evidence="11" type="synonym">pri</name>
    <name evidence="12" type="synonym">tal</name>
    <name evidence="12" type="ORF">CG42384</name>
</gene>
<proteinExistence type="evidence at protein level"/>
<feature type="chain" id="PRO_0000435525" description="Peptide tarsal-less 1A">
    <location>
        <begin position="1"/>
        <end position="11"/>
    </location>
</feature>
<keyword id="KW-0963">Cytoplasm</keyword>
<keyword id="KW-0217">Developmental protein</keyword>
<keyword id="KW-0539">Nucleus</keyword>
<keyword id="KW-1185">Reference proteome</keyword>
<protein>
    <recommendedName>
        <fullName evidence="12">Peptide tarsal-less 1A</fullName>
    </recommendedName>
    <alternativeName>
        <fullName evidence="11">Peptide polished rice 1</fullName>
    </alternativeName>
</protein>
<sequence>MAAYLDPTGQY</sequence>
<name>TAL1A_DROME</name>
<dbReference type="EMBL" id="AB300657">
    <property type="protein sequence ID" value="BAF56585.1"/>
    <property type="molecule type" value="mRNA"/>
</dbReference>
<dbReference type="EMBL" id="EF427619">
    <property type="protein sequence ID" value="ABO09841.1"/>
    <property type="molecule type" value="mRNA"/>
</dbReference>
<dbReference type="EMBL" id="AE014297">
    <property type="protein sequence ID" value="ACL83508.1"/>
    <property type="molecule type" value="Genomic_DNA"/>
</dbReference>
<dbReference type="RefSeq" id="NP_001138050.1">
    <property type="nucleotide sequence ID" value="NM_001144578.2"/>
</dbReference>
<dbReference type="DNASU" id="7354381"/>
<dbReference type="EnsemblMetazoa" id="FBtr0299997">
    <property type="protein sequence ID" value="FBpp0289274"/>
    <property type="gene ID" value="FBgn0259730"/>
</dbReference>
<dbReference type="EnsemblMetazoa" id="FBtr0299998">
    <property type="protein sequence ID" value="FBpp0289275"/>
    <property type="gene ID" value="FBgn0259731"/>
</dbReference>
<dbReference type="GeneID" id="7354376"/>
<dbReference type="GeneID" id="7354381"/>
<dbReference type="KEGG" id="dme:Dmel_CG42384"/>
<dbReference type="KEGG" id="dme:Dmel_CG42385"/>
<dbReference type="AGR" id="FB:FBgn0259730"/>
<dbReference type="CTD" id="7354376"/>
<dbReference type="CTD" id="7354381"/>
<dbReference type="FlyBase" id="FBgn0259730">
    <property type="gene designation" value="tal-1A"/>
</dbReference>
<dbReference type="VEuPathDB" id="VectorBase:FBgn0259730"/>
<dbReference type="VEuPathDB" id="VectorBase:FBgn0259731"/>
<dbReference type="InParanoid" id="C0HJX4"/>
<dbReference type="BioGRID-ORCS" id="7354376">
    <property type="hits" value="0 hits in 1 CRISPR screen"/>
</dbReference>
<dbReference type="BioGRID-ORCS" id="7354381">
    <property type="hits" value="0 hits in 1 CRISPR screen"/>
</dbReference>
<dbReference type="ChiTaRS" id="tal-1A">
    <property type="organism name" value="fly"/>
</dbReference>
<dbReference type="PRO" id="PR:C0HJX4"/>
<dbReference type="Proteomes" id="UP000000803">
    <property type="component" value="Chromosome 3R"/>
</dbReference>
<dbReference type="Bgee" id="FBgn0259730">
    <property type="expression patterns" value="Expressed in saliva-secreting gland and 26 other cell types or tissues"/>
</dbReference>
<dbReference type="GO" id="GO:0005737">
    <property type="term" value="C:cytoplasm"/>
    <property type="evidence" value="ECO:0007669"/>
    <property type="project" value="UniProtKB-SubCell"/>
</dbReference>
<dbReference type="GO" id="GO:0005634">
    <property type="term" value="C:nucleus"/>
    <property type="evidence" value="ECO:0007669"/>
    <property type="project" value="UniProtKB-SubCell"/>
</dbReference>
<dbReference type="GO" id="GO:0007015">
    <property type="term" value="P:actin filament organization"/>
    <property type="evidence" value="ECO:0000316"/>
    <property type="project" value="FlyBase"/>
</dbReference>
<dbReference type="GO" id="GO:0002009">
    <property type="term" value="P:morphogenesis of an epithelium"/>
    <property type="evidence" value="ECO:0000316"/>
    <property type="project" value="FlyBase"/>
</dbReference>
<dbReference type="InterPro" id="IPR055084">
    <property type="entry name" value="Tal-1A_2A"/>
</dbReference>
<dbReference type="Pfam" id="PF22856">
    <property type="entry name" value="Tal-1A_2A"/>
    <property type="match status" value="1"/>
</dbReference>